<evidence type="ECO:0000255" key="1">
    <source>
        <dbReference type="HAMAP-Rule" id="MF_00101"/>
    </source>
</evidence>
<dbReference type="EC" id="2.7.8.7" evidence="1"/>
<dbReference type="EMBL" id="BX908798">
    <property type="protein sequence ID" value="CAF24435.1"/>
    <property type="molecule type" value="Genomic_DNA"/>
</dbReference>
<dbReference type="RefSeq" id="WP_011176256.1">
    <property type="nucleotide sequence ID" value="NC_005861.2"/>
</dbReference>
<dbReference type="SMR" id="Q6MAG4"/>
<dbReference type="STRING" id="264201.pc1711"/>
<dbReference type="KEGG" id="pcu:PC_RS08195"/>
<dbReference type="eggNOG" id="COG0736">
    <property type="taxonomic scope" value="Bacteria"/>
</dbReference>
<dbReference type="HOGENOM" id="CLU_089696_0_2_0"/>
<dbReference type="OrthoDB" id="517356at2"/>
<dbReference type="Proteomes" id="UP000000529">
    <property type="component" value="Chromosome"/>
</dbReference>
<dbReference type="GO" id="GO:0005737">
    <property type="term" value="C:cytoplasm"/>
    <property type="evidence" value="ECO:0007669"/>
    <property type="project" value="UniProtKB-SubCell"/>
</dbReference>
<dbReference type="GO" id="GO:0008897">
    <property type="term" value="F:holo-[acyl-carrier-protein] synthase activity"/>
    <property type="evidence" value="ECO:0007669"/>
    <property type="project" value="UniProtKB-UniRule"/>
</dbReference>
<dbReference type="GO" id="GO:0000287">
    <property type="term" value="F:magnesium ion binding"/>
    <property type="evidence" value="ECO:0007669"/>
    <property type="project" value="UniProtKB-UniRule"/>
</dbReference>
<dbReference type="GO" id="GO:0006633">
    <property type="term" value="P:fatty acid biosynthetic process"/>
    <property type="evidence" value="ECO:0007669"/>
    <property type="project" value="UniProtKB-UniRule"/>
</dbReference>
<dbReference type="Gene3D" id="3.90.470.20">
    <property type="entry name" value="4'-phosphopantetheinyl transferase domain"/>
    <property type="match status" value="1"/>
</dbReference>
<dbReference type="HAMAP" id="MF_00101">
    <property type="entry name" value="AcpS"/>
    <property type="match status" value="1"/>
</dbReference>
<dbReference type="InterPro" id="IPR008278">
    <property type="entry name" value="4-PPantetheinyl_Trfase_dom"/>
</dbReference>
<dbReference type="InterPro" id="IPR037143">
    <property type="entry name" value="4-PPantetheinyl_Trfase_dom_sf"/>
</dbReference>
<dbReference type="InterPro" id="IPR002582">
    <property type="entry name" value="ACPS"/>
</dbReference>
<dbReference type="InterPro" id="IPR004568">
    <property type="entry name" value="Ppantetheine-prot_Trfase_dom"/>
</dbReference>
<dbReference type="NCBIfam" id="TIGR00516">
    <property type="entry name" value="acpS"/>
    <property type="match status" value="1"/>
</dbReference>
<dbReference type="NCBIfam" id="TIGR00556">
    <property type="entry name" value="pantethn_trn"/>
    <property type="match status" value="1"/>
</dbReference>
<dbReference type="Pfam" id="PF01648">
    <property type="entry name" value="ACPS"/>
    <property type="match status" value="1"/>
</dbReference>
<dbReference type="SUPFAM" id="SSF56214">
    <property type="entry name" value="4'-phosphopantetheinyl transferase"/>
    <property type="match status" value="1"/>
</dbReference>
<keyword id="KW-0963">Cytoplasm</keyword>
<keyword id="KW-0275">Fatty acid biosynthesis</keyword>
<keyword id="KW-0276">Fatty acid metabolism</keyword>
<keyword id="KW-0444">Lipid biosynthesis</keyword>
<keyword id="KW-0443">Lipid metabolism</keyword>
<keyword id="KW-0460">Magnesium</keyword>
<keyword id="KW-0479">Metal-binding</keyword>
<keyword id="KW-1185">Reference proteome</keyword>
<keyword id="KW-0808">Transferase</keyword>
<comment type="function">
    <text evidence="1">Transfers the 4'-phosphopantetheine moiety from coenzyme A to a Ser of acyl-carrier-protein.</text>
</comment>
<comment type="catalytic activity">
    <reaction evidence="1">
        <text>apo-[ACP] + CoA = holo-[ACP] + adenosine 3',5'-bisphosphate + H(+)</text>
        <dbReference type="Rhea" id="RHEA:12068"/>
        <dbReference type="Rhea" id="RHEA-COMP:9685"/>
        <dbReference type="Rhea" id="RHEA-COMP:9690"/>
        <dbReference type="ChEBI" id="CHEBI:15378"/>
        <dbReference type="ChEBI" id="CHEBI:29999"/>
        <dbReference type="ChEBI" id="CHEBI:57287"/>
        <dbReference type="ChEBI" id="CHEBI:58343"/>
        <dbReference type="ChEBI" id="CHEBI:64479"/>
        <dbReference type="EC" id="2.7.8.7"/>
    </reaction>
</comment>
<comment type="cofactor">
    <cofactor evidence="1">
        <name>Mg(2+)</name>
        <dbReference type="ChEBI" id="CHEBI:18420"/>
    </cofactor>
</comment>
<comment type="subcellular location">
    <subcellularLocation>
        <location evidence="1">Cytoplasm</location>
    </subcellularLocation>
</comment>
<comment type="similarity">
    <text evidence="1">Belongs to the P-Pant transferase superfamily. AcpS family.</text>
</comment>
<name>ACPS_PARUW</name>
<reference key="1">
    <citation type="journal article" date="2004" name="Science">
        <title>Illuminating the evolutionary history of chlamydiae.</title>
        <authorList>
            <person name="Horn M."/>
            <person name="Collingro A."/>
            <person name="Schmitz-Esser S."/>
            <person name="Beier C.L."/>
            <person name="Purkhold U."/>
            <person name="Fartmann B."/>
            <person name="Brandt P."/>
            <person name="Nyakatura G.J."/>
            <person name="Droege M."/>
            <person name="Frishman D."/>
            <person name="Rattei T."/>
            <person name="Mewes H.-W."/>
            <person name="Wagner M."/>
        </authorList>
    </citation>
    <scope>NUCLEOTIDE SEQUENCE [LARGE SCALE GENOMIC DNA]</scope>
    <source>
        <strain>UWE25</strain>
    </source>
</reference>
<feature type="chain" id="PRO_0000175683" description="Holo-[acyl-carrier-protein] synthase">
    <location>
        <begin position="1"/>
        <end position="122"/>
    </location>
</feature>
<feature type="binding site" evidence="1">
    <location>
        <position position="8"/>
    </location>
    <ligand>
        <name>Mg(2+)</name>
        <dbReference type="ChEBI" id="CHEBI:18420"/>
    </ligand>
</feature>
<feature type="binding site" evidence="1">
    <location>
        <position position="57"/>
    </location>
    <ligand>
        <name>Mg(2+)</name>
        <dbReference type="ChEBI" id="CHEBI:18420"/>
    </ligand>
</feature>
<accession>Q6MAG4</accession>
<organism>
    <name type="scientific">Protochlamydia amoebophila (strain UWE25)</name>
    <dbReference type="NCBI Taxonomy" id="264201"/>
    <lineage>
        <taxon>Bacteria</taxon>
        <taxon>Pseudomonadati</taxon>
        <taxon>Chlamydiota</taxon>
        <taxon>Chlamydiia</taxon>
        <taxon>Parachlamydiales</taxon>
        <taxon>Parachlamydiaceae</taxon>
        <taxon>Candidatus Protochlamydia</taxon>
    </lineage>
</organism>
<gene>
    <name evidence="1" type="primary">acpS</name>
    <name type="ordered locus">pc1711</name>
</gene>
<sequence>MTLGIGNDIIEIERIQANIKKYGQRFLNRVFTKNEQIYCLNRKMPALHLAGRFAAKEAVVKALGTGFSQGISWLDVEILNDANGKPYVSISPLLTQLFASPKLLISISHCHHYATAFAVWSS</sequence>
<proteinExistence type="inferred from homology"/>
<protein>
    <recommendedName>
        <fullName evidence="1">Holo-[acyl-carrier-protein] synthase</fullName>
        <shortName evidence="1">Holo-ACP synthase</shortName>
        <ecNumber evidence="1">2.7.8.7</ecNumber>
    </recommendedName>
    <alternativeName>
        <fullName evidence="1">4'-phosphopantetheinyl transferase AcpS</fullName>
    </alternativeName>
</protein>